<sequence>MDLADIPQQQRLMAGLALVVATVIFLKLLLSFRSGGGKKRLPPTIPGAPVVGGLVKFMRGPIPMIREQYAALGSVFTVPIITRRITFLIGPEVSAHFFKGNEAEMSQQEVYRFNVPTFGPGVVFDVDYSVRQEQFRFFTEALRANKLRSYVDQMVAEAEEYFSKWGESGTVDLKYELEHLIILTASRCLLGREVREKLFDDVSALFHDLDNGIQPISVLFPYLPIPAHKRRDKARARLAEIFATIIKSRKASGQSEEDMLQCFIDSKYKNGRPTTEGEVTGLLIAALFAGQHTSSITSTWTGAYMLRFKQYFAEAVEEQKDVMKRHGDKIDHDILAEMDVLYRCIKEALRLHPPLIMLLRQSHSDFTVTTKEGKEYDIPKGHIVATSPSFANRLPHIYKNPDSYDPDRFGPGREEDKAAGAFSYISFGGGRHGCLGEPFAYLQIKAIWTHLLRNFEFELVSPFPENDWNAMVVGIKGEVMVNYKRRKLVVDN</sequence>
<proteinExistence type="evidence at protein level"/>
<evidence type="ECO:0000250" key="1"/>
<evidence type="ECO:0000255" key="2"/>
<evidence type="ECO:0000305" key="3"/>
<keyword id="KW-0903">Direct protein sequencing</keyword>
<keyword id="KW-0349">Heme</keyword>
<keyword id="KW-0408">Iron</keyword>
<keyword id="KW-0444">Lipid biosynthesis</keyword>
<keyword id="KW-0443">Lipid metabolism</keyword>
<keyword id="KW-0472">Membrane</keyword>
<keyword id="KW-0479">Metal-binding</keyword>
<keyword id="KW-0489">Methyltransferase</keyword>
<keyword id="KW-0503">Monooxygenase</keyword>
<keyword id="KW-0560">Oxidoreductase</keyword>
<keyword id="KW-0752">Steroid biosynthesis</keyword>
<keyword id="KW-0753">Steroid metabolism</keyword>
<keyword id="KW-0756">Sterol biosynthesis</keyword>
<keyword id="KW-1207">Sterol metabolism</keyword>
<keyword id="KW-0808">Transferase</keyword>
<keyword id="KW-0812">Transmembrane</keyword>
<keyword id="KW-1133">Transmembrane helix</keyword>
<name>CP51_SORBI</name>
<comment type="function">
    <text>Catalyzes the 14-alpha demethylation of obtusifoliol to 4 alpha-methyl-5 alpha-ergosta-8,14,24(28)-trien-3 beta-ol.</text>
</comment>
<comment type="catalytic activity">
    <reaction>
        <text>a 14alpha-methyl steroid + 3 reduced [NADPH--hemoprotein reductase] + 3 O2 = a Delta(14) steroid + formate + 3 oxidized [NADPH--hemoprotein reductase] + 4 H2O + 4 H(+)</text>
        <dbReference type="Rhea" id="RHEA:54028"/>
        <dbReference type="Rhea" id="RHEA-COMP:11964"/>
        <dbReference type="Rhea" id="RHEA-COMP:11965"/>
        <dbReference type="ChEBI" id="CHEBI:15377"/>
        <dbReference type="ChEBI" id="CHEBI:15378"/>
        <dbReference type="ChEBI" id="CHEBI:15379"/>
        <dbReference type="ChEBI" id="CHEBI:15740"/>
        <dbReference type="ChEBI" id="CHEBI:57618"/>
        <dbReference type="ChEBI" id="CHEBI:58210"/>
        <dbReference type="ChEBI" id="CHEBI:138029"/>
        <dbReference type="ChEBI" id="CHEBI:138031"/>
        <dbReference type="EC" id="1.14.14.154"/>
    </reaction>
</comment>
<comment type="cofactor">
    <cofactor>
        <name>heme</name>
        <dbReference type="ChEBI" id="CHEBI:30413"/>
    </cofactor>
</comment>
<comment type="pathway">
    <text>Steroid biosynthesis; zymosterol biosynthesis; zymosterol from lanosterol: step 1/6.</text>
</comment>
<comment type="subcellular location">
    <subcellularLocation>
        <location evidence="3">Membrane</location>
        <topology evidence="3">Single-pass membrane protein</topology>
    </subcellularLocation>
</comment>
<comment type="similarity">
    <text evidence="3">Belongs to the cytochrome P450 family.</text>
</comment>
<gene>
    <name type="primary">CYP51</name>
</gene>
<feature type="chain" id="PRO_0000052013" description="Obtusifoliol 14-alpha demethylase">
    <location>
        <begin position="1"/>
        <end position="492"/>
    </location>
</feature>
<feature type="transmembrane region" description="Helical" evidence="2">
    <location>
        <begin position="12"/>
        <end position="32"/>
    </location>
</feature>
<feature type="binding site" description="axial binding residue" evidence="1">
    <location>
        <position position="434"/>
    </location>
    <ligand>
        <name>heme</name>
        <dbReference type="ChEBI" id="CHEBI:30413"/>
    </ligand>
    <ligandPart>
        <name>Fe</name>
        <dbReference type="ChEBI" id="CHEBI:18248"/>
    </ligandPart>
</feature>
<reference key="1">
    <citation type="journal article" date="1997" name="Plant J.">
        <title>Cloning and expression in Escherichia coli of the obtusifoliol 14 alpha-demethylase of Sorghum bicolor (L.) Moench, a cytochrome P450 orthologous to the sterol 14 alpha-demethylases (CYP51) from fungi and mammals.</title>
        <authorList>
            <person name="Bak S."/>
            <person name="Kahn R.A."/>
            <person name="Olsen C.E."/>
            <person name="Halkier B.A."/>
        </authorList>
    </citation>
    <scope>NUCLEOTIDE SEQUENCE [MRNA]</scope>
    <scope>PARTIAL PROTEIN SEQUENCE</scope>
    <source>
        <strain>cv. SS1000</strain>
        <tissue>Etiolated seedling</tissue>
    </source>
</reference>
<dbReference type="EC" id="1.14.14.154"/>
<dbReference type="EMBL" id="U74319">
    <property type="protein sequence ID" value="AAC49659.1"/>
    <property type="molecule type" value="mRNA"/>
</dbReference>
<dbReference type="PIR" id="T14820">
    <property type="entry name" value="T14820"/>
</dbReference>
<dbReference type="SMR" id="P93846"/>
<dbReference type="ChEMBL" id="CHEMBL2366482"/>
<dbReference type="eggNOG" id="KOG0684">
    <property type="taxonomic scope" value="Eukaryota"/>
</dbReference>
<dbReference type="UniPathway" id="UPA00770">
    <property type="reaction ID" value="UER00754"/>
</dbReference>
<dbReference type="ExpressionAtlas" id="P93846">
    <property type="expression patterns" value="baseline and differential"/>
</dbReference>
<dbReference type="GO" id="GO:0016020">
    <property type="term" value="C:membrane"/>
    <property type="evidence" value="ECO:0007669"/>
    <property type="project" value="UniProtKB-SubCell"/>
</dbReference>
<dbReference type="GO" id="GO:0020037">
    <property type="term" value="F:heme binding"/>
    <property type="evidence" value="ECO:0007669"/>
    <property type="project" value="InterPro"/>
</dbReference>
<dbReference type="GO" id="GO:0005506">
    <property type="term" value="F:iron ion binding"/>
    <property type="evidence" value="ECO:0007669"/>
    <property type="project" value="InterPro"/>
</dbReference>
<dbReference type="GO" id="GO:0008168">
    <property type="term" value="F:methyltransferase activity"/>
    <property type="evidence" value="ECO:0007669"/>
    <property type="project" value="UniProtKB-KW"/>
</dbReference>
<dbReference type="GO" id="GO:0008398">
    <property type="term" value="F:sterol 14-demethylase activity"/>
    <property type="evidence" value="ECO:0007669"/>
    <property type="project" value="UniProtKB-EC"/>
</dbReference>
<dbReference type="GO" id="GO:0032259">
    <property type="term" value="P:methylation"/>
    <property type="evidence" value="ECO:0007669"/>
    <property type="project" value="UniProtKB-KW"/>
</dbReference>
<dbReference type="GO" id="GO:0016126">
    <property type="term" value="P:sterol biosynthetic process"/>
    <property type="evidence" value="ECO:0007669"/>
    <property type="project" value="UniProtKB-KW"/>
</dbReference>
<dbReference type="CDD" id="cd11042">
    <property type="entry name" value="CYP51-like"/>
    <property type="match status" value="1"/>
</dbReference>
<dbReference type="FunFam" id="1.10.630.10:FF:000028">
    <property type="entry name" value="Cytochrome p450 51g1"/>
    <property type="match status" value="1"/>
</dbReference>
<dbReference type="Gene3D" id="1.10.630.10">
    <property type="entry name" value="Cytochrome P450"/>
    <property type="match status" value="1"/>
</dbReference>
<dbReference type="InterPro" id="IPR050529">
    <property type="entry name" value="CYP450_sterol_14alpha_dmase"/>
</dbReference>
<dbReference type="InterPro" id="IPR001128">
    <property type="entry name" value="Cyt_P450"/>
</dbReference>
<dbReference type="InterPro" id="IPR017972">
    <property type="entry name" value="Cyt_P450_CS"/>
</dbReference>
<dbReference type="InterPro" id="IPR002403">
    <property type="entry name" value="Cyt_P450_E_grp-IV"/>
</dbReference>
<dbReference type="InterPro" id="IPR036396">
    <property type="entry name" value="Cyt_P450_sf"/>
</dbReference>
<dbReference type="PANTHER" id="PTHR24304:SF2">
    <property type="entry name" value="24-HYDROXYCHOLESTEROL 7-ALPHA-HYDROXYLASE"/>
    <property type="match status" value="1"/>
</dbReference>
<dbReference type="PANTHER" id="PTHR24304">
    <property type="entry name" value="CYTOCHROME P450 FAMILY 7"/>
    <property type="match status" value="1"/>
</dbReference>
<dbReference type="Pfam" id="PF00067">
    <property type="entry name" value="p450"/>
    <property type="match status" value="1"/>
</dbReference>
<dbReference type="PRINTS" id="PR00465">
    <property type="entry name" value="EP450IV"/>
</dbReference>
<dbReference type="PRINTS" id="PR00385">
    <property type="entry name" value="P450"/>
</dbReference>
<dbReference type="SUPFAM" id="SSF48264">
    <property type="entry name" value="Cytochrome P450"/>
    <property type="match status" value="1"/>
</dbReference>
<dbReference type="PROSITE" id="PS00086">
    <property type="entry name" value="CYTOCHROME_P450"/>
    <property type="match status" value="1"/>
</dbReference>
<protein>
    <recommendedName>
        <fullName>Obtusifoliol 14-alpha demethylase</fullName>
        <ecNumber>1.14.14.154</ecNumber>
    </recommendedName>
    <alternativeName>
        <fullName>CYPLI</fullName>
    </alternativeName>
    <alternativeName>
        <fullName>Cytochrome P450 51</fullName>
    </alternativeName>
    <alternativeName>
        <fullName>Cytochrome P450-LIA1</fullName>
    </alternativeName>
</protein>
<organism>
    <name type="scientific">Sorghum bicolor</name>
    <name type="common">Sorghum</name>
    <name type="synonym">Sorghum vulgare</name>
    <dbReference type="NCBI Taxonomy" id="4558"/>
    <lineage>
        <taxon>Eukaryota</taxon>
        <taxon>Viridiplantae</taxon>
        <taxon>Streptophyta</taxon>
        <taxon>Embryophyta</taxon>
        <taxon>Tracheophyta</taxon>
        <taxon>Spermatophyta</taxon>
        <taxon>Magnoliopsida</taxon>
        <taxon>Liliopsida</taxon>
        <taxon>Poales</taxon>
        <taxon>Poaceae</taxon>
        <taxon>PACMAD clade</taxon>
        <taxon>Panicoideae</taxon>
        <taxon>Andropogonodae</taxon>
        <taxon>Andropogoneae</taxon>
        <taxon>Sorghinae</taxon>
        <taxon>Sorghum</taxon>
    </lineage>
</organism>
<accession>P93846</accession>